<feature type="chain" id="PRO_0000133609" description="Minor capsid protein L2">
    <location>
        <begin position="1"/>
        <end position="477"/>
    </location>
</feature>
<feature type="short sequence motif" description="Nuclear localization signal" evidence="1">
    <location>
        <begin position="1"/>
        <end position="12"/>
    </location>
</feature>
<feature type="short sequence motif" description="Nuclear localization signal" evidence="1">
    <location>
        <begin position="459"/>
        <end position="466"/>
    </location>
</feature>
<feature type="disulfide bond" evidence="1">
    <location>
        <begin position="21"/>
        <end position="27"/>
    </location>
</feature>
<keyword id="KW-0167">Capsid protein</keyword>
<keyword id="KW-1176">Cytoplasmic inwards viral transport</keyword>
<keyword id="KW-1015">Disulfide bond</keyword>
<keyword id="KW-0238">DNA-binding</keyword>
<keyword id="KW-1039">Host endosome</keyword>
<keyword id="KW-1040">Host Golgi apparatus</keyword>
<keyword id="KW-1048">Host nucleus</keyword>
<keyword id="KW-0945">Host-virus interaction</keyword>
<keyword id="KW-0426">Late protein</keyword>
<keyword id="KW-1177">Microtubular inwards viral transport</keyword>
<keyword id="KW-0597">Phosphoprotein</keyword>
<keyword id="KW-1163">Viral penetration into host nucleus</keyword>
<keyword id="KW-0946">Virion</keyword>
<keyword id="KW-1160">Virus entry into host cell</keyword>
<comment type="function">
    <text evidence="1">Minor protein of the capsid that localizes along the inner surface of the virion, within the central cavities beneath the L1 pentamers. Plays a role in capsid stabilization through interaction with the major capsid protein L1. Once the virion enters the host cell, L2 escorts the genomic DNA into the nucleus by promoting escape from the endosomal compartments and traffic through the host Golgi network. Mechanistically, the C-terminus of L2 possesses a cell-penetrating peptide that protudes from the host endosome, interacts with host cytoplasmic retromer cargo and thereby mediates the capsid delivery to the host trans-Golgi network. Plays a role through its interaction with host dynein in the intracellular microtubule-dependent transport of viral capsid toward the nucleus. Mediates the viral genome import into the nucleus through binding to host importins. Once within the nucleus, L2 localizes viral genomes to host PML bodies in order to activate early gene expression for establishment of infection. Later on, promotes late gene expression by interacting with the viral E2 protein and by inhibiting its transcriptional activation functions. During virion assembly, encapsidates the genome by direct interaction with the viral DNA.</text>
</comment>
<comment type="subunit">
    <text evidence="1">Interacts with major capsid protein L1. Interacts with E2; this interaction inhibits E2 transcriptional activity but not the DNA replication function E2. Interacts with host GADD45GIP1. Interacts with host HSPA8; this interaction is required for L2 nuclear translocation. Interacts with host importins KPNB2 and KPNB3. Forms a complex with importin alpha2-beta1 heterodimers via interaction with the importin alpha2 adapter. Interacts with host DYNLT1; this interaction is essential for virus intracellular transport during entry. Interacts (via C-terminus) with host retromer subunits VPS35 and VPS29.</text>
</comment>
<comment type="subcellular location">
    <subcellularLocation>
        <location evidence="1">Virion</location>
    </subcellularLocation>
    <subcellularLocation>
        <location evidence="1">Host nucleus</location>
    </subcellularLocation>
    <subcellularLocation>
        <location evidence="1">Host early endosome</location>
    </subcellularLocation>
    <subcellularLocation>
        <location evidence="1">Host Golgi apparatus</location>
    </subcellularLocation>
</comment>
<comment type="PTM">
    <text evidence="1">Highly phosphorylated.</text>
</comment>
<comment type="similarity">
    <text evidence="1">Belongs to the papillomaviridae L2 protein family.</text>
</comment>
<comment type="sequence caution" evidence="2">
    <conflict type="erroneous initiation">
        <sequence resource="EMBL-CDS" id="AAA47047"/>
    </conflict>
</comment>
<organism>
    <name type="scientific">Human papillomavirus 42</name>
    <dbReference type="NCBI Taxonomy" id="10590"/>
    <lineage>
        <taxon>Viruses</taxon>
        <taxon>Monodnaviria</taxon>
        <taxon>Shotokuvirae</taxon>
        <taxon>Cossaviricota</taxon>
        <taxon>Papovaviricetes</taxon>
        <taxon>Zurhausenvirales</taxon>
        <taxon>Papillomaviridae</taxon>
        <taxon>Firstpapillomavirinae</taxon>
        <taxon>Alphapapillomavirus</taxon>
        <taxon>Alphapapillomavirus 1</taxon>
    </lineage>
</organism>
<gene>
    <name evidence="1" type="primary">L2</name>
</gene>
<dbReference type="EMBL" id="M73236">
    <property type="protein sequence ID" value="AAA47047.1"/>
    <property type="status" value="ALT_INIT"/>
    <property type="molecule type" value="Genomic_DNA"/>
</dbReference>
<dbReference type="PIR" id="H39451">
    <property type="entry name" value="P2WL42"/>
</dbReference>
<dbReference type="Proteomes" id="UP000009122">
    <property type="component" value="Genome"/>
</dbReference>
<dbReference type="GO" id="GO:0043657">
    <property type="term" value="C:host cell"/>
    <property type="evidence" value="ECO:0007669"/>
    <property type="project" value="GOC"/>
</dbReference>
<dbReference type="GO" id="GO:0044174">
    <property type="term" value="C:host cell endosome"/>
    <property type="evidence" value="ECO:0007669"/>
    <property type="project" value="UniProtKB-KW"/>
</dbReference>
<dbReference type="GO" id="GO:0044177">
    <property type="term" value="C:host cell Golgi apparatus"/>
    <property type="evidence" value="ECO:0007669"/>
    <property type="project" value="UniProtKB-SubCell"/>
</dbReference>
<dbReference type="GO" id="GO:0042025">
    <property type="term" value="C:host cell nucleus"/>
    <property type="evidence" value="ECO:0007669"/>
    <property type="project" value="UniProtKB-SubCell"/>
</dbReference>
<dbReference type="GO" id="GO:0019028">
    <property type="term" value="C:viral capsid"/>
    <property type="evidence" value="ECO:0007669"/>
    <property type="project" value="UniProtKB-UniRule"/>
</dbReference>
<dbReference type="GO" id="GO:0003677">
    <property type="term" value="F:DNA binding"/>
    <property type="evidence" value="ECO:0007669"/>
    <property type="project" value="UniProtKB-UniRule"/>
</dbReference>
<dbReference type="GO" id="GO:0005198">
    <property type="term" value="F:structural molecule activity"/>
    <property type="evidence" value="ECO:0007669"/>
    <property type="project" value="UniProtKB-UniRule"/>
</dbReference>
<dbReference type="GO" id="GO:0075521">
    <property type="term" value="P:microtubule-dependent intracellular transport of viral material towards nucleus"/>
    <property type="evidence" value="ECO:0007669"/>
    <property type="project" value="UniProtKB-UniRule"/>
</dbReference>
<dbReference type="GO" id="GO:0046718">
    <property type="term" value="P:symbiont entry into host cell"/>
    <property type="evidence" value="ECO:0007669"/>
    <property type="project" value="UniProtKB-KW"/>
</dbReference>
<dbReference type="GO" id="GO:0075732">
    <property type="term" value="P:viral penetration into host nucleus"/>
    <property type="evidence" value="ECO:0007669"/>
    <property type="project" value="UniProtKB-KW"/>
</dbReference>
<dbReference type="HAMAP" id="MF_04003">
    <property type="entry name" value="PPV_L2"/>
    <property type="match status" value="1"/>
</dbReference>
<dbReference type="InterPro" id="IPR000784">
    <property type="entry name" value="Late_L2"/>
</dbReference>
<dbReference type="Pfam" id="PF00513">
    <property type="entry name" value="Late_protein_L2"/>
    <property type="match status" value="1"/>
</dbReference>
<organismHost>
    <name type="scientific">Homo sapiens</name>
    <name type="common">Human</name>
    <dbReference type="NCBI Taxonomy" id="9606"/>
</organismHost>
<proteinExistence type="inferred from homology"/>
<reference key="1">
    <citation type="journal article" date="1992" name="Virology">
        <title>Human papillomavirus type 42: new sequences, conserved genome organization.</title>
        <authorList>
            <person name="Philipp W."/>
            <person name="Honore N."/>
            <person name="Sapp M."/>
            <person name="Cole S.T."/>
            <person name="Streeck R.E."/>
        </authorList>
    </citation>
    <scope>NUCLEOTIDE SEQUENCE [GENOMIC DNA]</scope>
</reference>
<evidence type="ECO:0000255" key="1">
    <source>
        <dbReference type="HAMAP-Rule" id="MF_04003"/>
    </source>
</evidence>
<evidence type="ECO:0000305" key="2"/>
<name>VL2_HPV42</name>
<protein>
    <recommendedName>
        <fullName evidence="1">Minor capsid protein L2</fullName>
    </recommendedName>
</protein>
<accession>P27235</accession>
<sequence length="477" mass="51254">MPPQRSRRRKRASATQLYQTCKASGTCPPDVIPKVEGTTLADKILQWGSLGVFFGGLGIGTGAGTGGRTGYVPLGTRPPVIAEPGPAVRPPIAVDTVGPSDPSIVSLLEESSVIDAGITVPDITSHGGFNITTSTGGPASTPAILDISPPTNTIRVTTTTSTNPLYIDPFTLQPPLPAEVNGRLLISTPTITPHSYEEIPMDTFVVSTDTTNTFTSTPIPGPRSSARLGLYSRATQQRPVTTSAFLTSPARLVTYDNPAYEGLTEDTLVFEHPSIHTAPDPDFMDIVALHRPMLSSKQGSVRVSRIGQRLSMQTRRGTRFGSRVHFFHDLSPITHSSETIELQPLSASSVSAASNINDGLFDIYVDTSDVNVTNTTSSIPMHGFATPRLSTTSFPTLPSMSTHSANTTIPFSFPATVHVGPDLSVVDHPWDSTPTSVMPQGNFVMVSGWDFILHPSYFWRRRRKPVPYFFADVRVAA</sequence>